<accession>A1UT47</accession>
<dbReference type="EC" id="6.3.5.3" evidence="1"/>
<dbReference type="EMBL" id="CP000524">
    <property type="protein sequence ID" value="ABM44475.1"/>
    <property type="molecule type" value="Genomic_DNA"/>
</dbReference>
<dbReference type="RefSeq" id="WP_005767266.1">
    <property type="nucleotide sequence ID" value="NC_008783.1"/>
</dbReference>
<dbReference type="SMR" id="A1UT47"/>
<dbReference type="STRING" id="360095.BARBAKC583_0863"/>
<dbReference type="GeneID" id="4684564"/>
<dbReference type="KEGG" id="bbk:BARBAKC583_0863"/>
<dbReference type="PATRIC" id="fig|360095.6.peg.841"/>
<dbReference type="eggNOG" id="COG0046">
    <property type="taxonomic scope" value="Bacteria"/>
</dbReference>
<dbReference type="HOGENOM" id="CLU_003100_0_1_5"/>
<dbReference type="OrthoDB" id="9804441at2"/>
<dbReference type="UniPathway" id="UPA00074">
    <property type="reaction ID" value="UER00128"/>
</dbReference>
<dbReference type="Proteomes" id="UP000000643">
    <property type="component" value="Chromosome"/>
</dbReference>
<dbReference type="GO" id="GO:0005737">
    <property type="term" value="C:cytoplasm"/>
    <property type="evidence" value="ECO:0007669"/>
    <property type="project" value="UniProtKB-SubCell"/>
</dbReference>
<dbReference type="GO" id="GO:0005524">
    <property type="term" value="F:ATP binding"/>
    <property type="evidence" value="ECO:0007669"/>
    <property type="project" value="UniProtKB-UniRule"/>
</dbReference>
<dbReference type="GO" id="GO:0000287">
    <property type="term" value="F:magnesium ion binding"/>
    <property type="evidence" value="ECO:0007669"/>
    <property type="project" value="UniProtKB-UniRule"/>
</dbReference>
<dbReference type="GO" id="GO:0004642">
    <property type="term" value="F:phosphoribosylformylglycinamidine synthase activity"/>
    <property type="evidence" value="ECO:0007669"/>
    <property type="project" value="UniProtKB-UniRule"/>
</dbReference>
<dbReference type="GO" id="GO:0006189">
    <property type="term" value="P:'de novo' IMP biosynthetic process"/>
    <property type="evidence" value="ECO:0007669"/>
    <property type="project" value="UniProtKB-UniRule"/>
</dbReference>
<dbReference type="CDD" id="cd02203">
    <property type="entry name" value="PurL_repeat1"/>
    <property type="match status" value="1"/>
</dbReference>
<dbReference type="CDD" id="cd02204">
    <property type="entry name" value="PurL_repeat2"/>
    <property type="match status" value="1"/>
</dbReference>
<dbReference type="FunFam" id="3.30.1330.10:FF:000004">
    <property type="entry name" value="Phosphoribosylformylglycinamidine synthase subunit PurL"/>
    <property type="match status" value="1"/>
</dbReference>
<dbReference type="Gene3D" id="3.90.650.10">
    <property type="entry name" value="PurM-like C-terminal domain"/>
    <property type="match status" value="2"/>
</dbReference>
<dbReference type="Gene3D" id="3.30.1330.10">
    <property type="entry name" value="PurM-like, N-terminal domain"/>
    <property type="match status" value="2"/>
</dbReference>
<dbReference type="HAMAP" id="MF_00420">
    <property type="entry name" value="PurL_2"/>
    <property type="match status" value="1"/>
</dbReference>
<dbReference type="InterPro" id="IPR010074">
    <property type="entry name" value="PRibForGlyAmidine_synth_PurL"/>
</dbReference>
<dbReference type="InterPro" id="IPR041609">
    <property type="entry name" value="PurL_linker"/>
</dbReference>
<dbReference type="InterPro" id="IPR010918">
    <property type="entry name" value="PurM-like_C_dom"/>
</dbReference>
<dbReference type="InterPro" id="IPR036676">
    <property type="entry name" value="PurM-like_C_sf"/>
</dbReference>
<dbReference type="InterPro" id="IPR016188">
    <property type="entry name" value="PurM-like_N"/>
</dbReference>
<dbReference type="InterPro" id="IPR036921">
    <property type="entry name" value="PurM-like_N_sf"/>
</dbReference>
<dbReference type="NCBIfam" id="TIGR01736">
    <property type="entry name" value="FGAM_synth_II"/>
    <property type="match status" value="1"/>
</dbReference>
<dbReference type="NCBIfam" id="NF002290">
    <property type="entry name" value="PRK01213.1"/>
    <property type="match status" value="1"/>
</dbReference>
<dbReference type="PANTHER" id="PTHR43555">
    <property type="entry name" value="PHOSPHORIBOSYLFORMYLGLYCINAMIDINE SYNTHASE SUBUNIT PURL"/>
    <property type="match status" value="1"/>
</dbReference>
<dbReference type="PANTHER" id="PTHR43555:SF1">
    <property type="entry name" value="PHOSPHORIBOSYLFORMYLGLYCINAMIDINE SYNTHASE SUBUNIT PURL"/>
    <property type="match status" value="1"/>
</dbReference>
<dbReference type="Pfam" id="PF00586">
    <property type="entry name" value="AIRS"/>
    <property type="match status" value="2"/>
</dbReference>
<dbReference type="Pfam" id="PF02769">
    <property type="entry name" value="AIRS_C"/>
    <property type="match status" value="2"/>
</dbReference>
<dbReference type="Pfam" id="PF18072">
    <property type="entry name" value="FGAR-AT_linker"/>
    <property type="match status" value="1"/>
</dbReference>
<dbReference type="PIRSF" id="PIRSF001587">
    <property type="entry name" value="FGAM_synthase_II"/>
    <property type="match status" value="1"/>
</dbReference>
<dbReference type="SUPFAM" id="SSF56042">
    <property type="entry name" value="PurM C-terminal domain-like"/>
    <property type="match status" value="2"/>
</dbReference>
<dbReference type="SUPFAM" id="SSF55326">
    <property type="entry name" value="PurM N-terminal domain-like"/>
    <property type="match status" value="2"/>
</dbReference>
<name>PURL_BARBK</name>
<gene>
    <name evidence="1" type="primary">purL</name>
    <name type="ordered locus">BARBAKC583_0863</name>
</gene>
<feature type="chain" id="PRO_1000050298" description="Phosphoribosylformylglycinamidine synthase subunit PurL">
    <location>
        <begin position="1"/>
        <end position="737"/>
    </location>
</feature>
<feature type="active site" evidence="1">
    <location>
        <position position="50"/>
    </location>
</feature>
<feature type="active site" description="Proton acceptor" evidence="1">
    <location>
        <position position="96"/>
    </location>
</feature>
<feature type="binding site" evidence="1">
    <location>
        <position position="53"/>
    </location>
    <ligand>
        <name>ATP</name>
        <dbReference type="ChEBI" id="CHEBI:30616"/>
    </ligand>
</feature>
<feature type="binding site" evidence="1">
    <location>
        <position position="92"/>
    </location>
    <ligand>
        <name>ATP</name>
        <dbReference type="ChEBI" id="CHEBI:30616"/>
    </ligand>
</feature>
<feature type="binding site" evidence="1">
    <location>
        <position position="94"/>
    </location>
    <ligand>
        <name>Mg(2+)</name>
        <dbReference type="ChEBI" id="CHEBI:18420"/>
        <label>1</label>
    </ligand>
</feature>
<feature type="binding site" evidence="1">
    <location>
        <begin position="95"/>
        <end position="98"/>
    </location>
    <ligand>
        <name>substrate</name>
    </ligand>
</feature>
<feature type="binding site" evidence="1">
    <location>
        <position position="117"/>
    </location>
    <ligand>
        <name>substrate</name>
    </ligand>
</feature>
<feature type="binding site" evidence="1">
    <location>
        <position position="118"/>
    </location>
    <ligand>
        <name>Mg(2+)</name>
        <dbReference type="ChEBI" id="CHEBI:18420"/>
        <label>2</label>
    </ligand>
</feature>
<feature type="binding site" evidence="1">
    <location>
        <position position="241"/>
    </location>
    <ligand>
        <name>substrate</name>
    </ligand>
</feature>
<feature type="binding site" evidence="1">
    <location>
        <position position="269"/>
    </location>
    <ligand>
        <name>Mg(2+)</name>
        <dbReference type="ChEBI" id="CHEBI:18420"/>
        <label>2</label>
    </ligand>
</feature>
<feature type="binding site" evidence="1">
    <location>
        <begin position="313"/>
        <end position="315"/>
    </location>
    <ligand>
        <name>substrate</name>
    </ligand>
</feature>
<feature type="binding site" evidence="1">
    <location>
        <position position="495"/>
    </location>
    <ligand>
        <name>ATP</name>
        <dbReference type="ChEBI" id="CHEBI:30616"/>
    </ligand>
</feature>
<feature type="binding site" evidence="1">
    <location>
        <position position="532"/>
    </location>
    <ligand>
        <name>ATP</name>
        <dbReference type="ChEBI" id="CHEBI:30616"/>
    </ligand>
</feature>
<feature type="binding site" evidence="1">
    <location>
        <position position="533"/>
    </location>
    <ligand>
        <name>Mg(2+)</name>
        <dbReference type="ChEBI" id="CHEBI:18420"/>
        <label>1</label>
    </ligand>
</feature>
<feature type="binding site" evidence="1">
    <location>
        <position position="535"/>
    </location>
    <ligand>
        <name>substrate</name>
    </ligand>
</feature>
<proteinExistence type="inferred from homology"/>
<comment type="function">
    <text evidence="1">Part of the phosphoribosylformylglycinamidine synthase complex involved in the purines biosynthetic pathway. Catalyzes the ATP-dependent conversion of formylglycinamide ribonucleotide (FGAR) and glutamine to yield formylglycinamidine ribonucleotide (FGAM) and glutamate. The FGAM synthase complex is composed of three subunits. PurQ produces an ammonia molecule by converting glutamine to glutamate. PurL transfers the ammonia molecule to FGAR to form FGAM in an ATP-dependent manner. PurS interacts with PurQ and PurL and is thought to assist in the transfer of the ammonia molecule from PurQ to PurL.</text>
</comment>
<comment type="catalytic activity">
    <reaction evidence="1">
        <text>N(2)-formyl-N(1)-(5-phospho-beta-D-ribosyl)glycinamide + L-glutamine + ATP + H2O = 2-formamido-N(1)-(5-O-phospho-beta-D-ribosyl)acetamidine + L-glutamate + ADP + phosphate + H(+)</text>
        <dbReference type="Rhea" id="RHEA:17129"/>
        <dbReference type="ChEBI" id="CHEBI:15377"/>
        <dbReference type="ChEBI" id="CHEBI:15378"/>
        <dbReference type="ChEBI" id="CHEBI:29985"/>
        <dbReference type="ChEBI" id="CHEBI:30616"/>
        <dbReference type="ChEBI" id="CHEBI:43474"/>
        <dbReference type="ChEBI" id="CHEBI:58359"/>
        <dbReference type="ChEBI" id="CHEBI:147286"/>
        <dbReference type="ChEBI" id="CHEBI:147287"/>
        <dbReference type="ChEBI" id="CHEBI:456216"/>
        <dbReference type="EC" id="6.3.5.3"/>
    </reaction>
</comment>
<comment type="pathway">
    <text evidence="1">Purine metabolism; IMP biosynthesis via de novo pathway; 5-amino-1-(5-phospho-D-ribosyl)imidazole from N(2)-formyl-N(1)-(5-phospho-D-ribosyl)glycinamide: step 1/2.</text>
</comment>
<comment type="subunit">
    <text evidence="1">Monomer. Part of the FGAM synthase complex composed of 1 PurL, 1 PurQ and 2 PurS subunits.</text>
</comment>
<comment type="subcellular location">
    <subcellularLocation>
        <location evidence="1">Cytoplasm</location>
    </subcellularLocation>
</comment>
<comment type="similarity">
    <text evidence="1">Belongs to the FGAMS family.</text>
</comment>
<organism>
    <name type="scientific">Bartonella bacilliformis (strain ATCC 35685 / KC583 / Herrer 020/F12,63)</name>
    <dbReference type="NCBI Taxonomy" id="360095"/>
    <lineage>
        <taxon>Bacteria</taxon>
        <taxon>Pseudomonadati</taxon>
        <taxon>Pseudomonadota</taxon>
        <taxon>Alphaproteobacteria</taxon>
        <taxon>Hyphomicrobiales</taxon>
        <taxon>Bartonellaceae</taxon>
        <taxon>Bartonella</taxon>
    </lineage>
</organism>
<sequence>MSVRNNSAITPELIAHHGLKIDEYQRILELIGREPTFTELGIFSAMWNEHCSYKSSKKWLKTLPTKGKCVIQGPGENAGVVDIGNGQCVVFKMESHNHPSYIEPYQGAATGIGGILRDIFTMGARPVAAINALRFGSPDHPRTRHLVSGVVSGIGGYSNAFGVPTVGGEVNFDKRYNGNILVNAFAAGIAKIDSIFYSKAQGVGLPVVYLGAKTGRDGVGGATMASAEFDDAIDEKRPTVQVGDPFTEKCLLEACLELMALKAVIAIQDMGAAGLTSSSVEMGAKGNLGIELNLDKIPVREENMTAYEIMLSESQERMLMVLKPEMEKQAAAIFHKWGLDFSIIGKTTDDLRFRVLHQGKEVVNLPIKELGDEAPVYDRPWIAPSPKAILKAEEVKEIENFGDALLTLLNSADQSSRRWVYEQYDTFIQGNSLVRPGGDAGVIRVDNNDKHALAFSSDVTPRYCEADPYEGGKQAVAECWRNISATGATPLAATDNLNFGNPEKPEIMGQLVFAIKGIGEACKELDFPIVSGNVSLYNETNGESILPTPTIAGVGIIDDWLKVVTVGGMQDGDIIILVGPCGSHLGQSIYVRDILNIDTGTPPHVDLQLEKKNGQFVRDVINRGFIHAAHDISDGGLAIALAEMVIKSGKGIRAKLSNISPRHAELFGEDQGRYLIAIKPNALNSLKELSQTNMISLTELGTVEGDALDIKDTLSLSVSQLTQAYESWFPKFMGNST</sequence>
<evidence type="ECO:0000255" key="1">
    <source>
        <dbReference type="HAMAP-Rule" id="MF_00420"/>
    </source>
</evidence>
<reference key="1">
    <citation type="submission" date="2006-12" db="EMBL/GenBank/DDBJ databases">
        <authorList>
            <person name="Hendrix L."/>
            <person name="Mohamoud Y."/>
            <person name="Radune D."/>
            <person name="Shvartsbeyn A."/>
            <person name="Daugherty S."/>
            <person name="Dodson R."/>
            <person name="Durkin A.S."/>
            <person name="Harkins D."/>
            <person name="Huot H."/>
            <person name="Kothari S.P."/>
            <person name="Madupu R."/>
            <person name="Li J."/>
            <person name="Nelson W.C."/>
            <person name="Shrivastava S."/>
            <person name="Giglio M.G."/>
            <person name="Haft D."/>
            <person name="Selengut J."/>
            <person name="Fraser-Ligget C."/>
            <person name="Seshadri R."/>
        </authorList>
    </citation>
    <scope>NUCLEOTIDE SEQUENCE [LARGE SCALE GENOMIC DNA]</scope>
    <source>
        <strain>ATCC 35685 / KC583 / Herrer 020/F12,63</strain>
    </source>
</reference>
<protein>
    <recommendedName>
        <fullName evidence="1">Phosphoribosylformylglycinamidine synthase subunit PurL</fullName>
        <shortName evidence="1">FGAM synthase</shortName>
        <ecNumber evidence="1">6.3.5.3</ecNumber>
    </recommendedName>
    <alternativeName>
        <fullName evidence="1">Formylglycinamide ribonucleotide amidotransferase subunit II</fullName>
        <shortName evidence="1">FGAR amidotransferase II</shortName>
        <shortName evidence="1">FGAR-AT II</shortName>
    </alternativeName>
    <alternativeName>
        <fullName evidence="1">Glutamine amidotransferase PurL</fullName>
    </alternativeName>
    <alternativeName>
        <fullName evidence="1">Phosphoribosylformylglycinamidine synthase subunit II</fullName>
    </alternativeName>
</protein>
<keyword id="KW-0067">ATP-binding</keyword>
<keyword id="KW-0963">Cytoplasm</keyword>
<keyword id="KW-0436">Ligase</keyword>
<keyword id="KW-0460">Magnesium</keyword>
<keyword id="KW-0479">Metal-binding</keyword>
<keyword id="KW-0547">Nucleotide-binding</keyword>
<keyword id="KW-0658">Purine biosynthesis</keyword>